<feature type="chain" id="PRO_0000379074" description="G-protein coupled receptor 161">
    <location>
        <begin position="1"/>
        <end position="526"/>
    </location>
</feature>
<feature type="topological domain" description="Extracellular" evidence="2">
    <location>
        <begin position="1"/>
        <end position="27"/>
    </location>
</feature>
<feature type="transmembrane region" description="Helical; Name=1" evidence="2">
    <location>
        <begin position="28"/>
        <end position="48"/>
    </location>
</feature>
<feature type="topological domain" description="Cytoplasmic" evidence="2">
    <location>
        <begin position="49"/>
        <end position="60"/>
    </location>
</feature>
<feature type="transmembrane region" description="Helical; Name=2" evidence="2">
    <location>
        <begin position="61"/>
        <end position="81"/>
    </location>
</feature>
<feature type="topological domain" description="Extracellular" evidence="2">
    <location>
        <begin position="82"/>
        <end position="98"/>
    </location>
</feature>
<feature type="transmembrane region" description="Helical; Name=3" evidence="2">
    <location>
        <begin position="99"/>
        <end position="119"/>
    </location>
</feature>
<feature type="topological domain" description="Cytoplasmic" evidence="2">
    <location>
        <begin position="120"/>
        <end position="139"/>
    </location>
</feature>
<feature type="transmembrane region" description="Helical; Name=4" evidence="2">
    <location>
        <begin position="140"/>
        <end position="160"/>
    </location>
</feature>
<feature type="topological domain" description="Extracellular" evidence="2">
    <location>
        <begin position="161"/>
        <end position="186"/>
    </location>
</feature>
<feature type="transmembrane region" description="Helical; Name=5" evidence="2">
    <location>
        <begin position="187"/>
        <end position="207"/>
    </location>
</feature>
<feature type="topological domain" description="Cytoplasmic" evidence="2">
    <location>
        <begin position="208"/>
        <end position="263"/>
    </location>
</feature>
<feature type="transmembrane region" description="Helical; Name=6" evidence="2">
    <location>
        <begin position="264"/>
        <end position="284"/>
    </location>
</feature>
<feature type="topological domain" description="Extracellular" evidence="2">
    <location>
        <begin position="285"/>
        <end position="300"/>
    </location>
</feature>
<feature type="transmembrane region" description="Helical; Name=7" evidence="2">
    <location>
        <begin position="301"/>
        <end position="321"/>
    </location>
</feature>
<feature type="topological domain" description="Cytoplasmic" evidence="2">
    <location>
        <begin position="322"/>
        <end position="526"/>
    </location>
</feature>
<feature type="region of interest" description="Disordered" evidence="4">
    <location>
        <begin position="231"/>
        <end position="250"/>
    </location>
</feature>
<feature type="region of interest" description="Disordered" evidence="4">
    <location>
        <begin position="505"/>
        <end position="526"/>
    </location>
</feature>
<feature type="compositionally biased region" description="Acidic residues" evidence="4">
    <location>
        <begin position="512"/>
        <end position="526"/>
    </location>
</feature>
<feature type="glycosylation site" description="N-linked (GlcNAc...) asparagine" evidence="2">
    <location>
        <position position="2"/>
    </location>
</feature>
<feature type="glycosylation site" description="N-linked (GlcNAc...) asparagine" evidence="2">
    <location>
        <position position="6"/>
    </location>
</feature>
<feature type="glycosylation site" description="N-linked (GlcNAc...) asparagine" evidence="2">
    <location>
        <position position="12"/>
    </location>
</feature>
<feature type="glycosylation site" description="N-linked (GlcNAc...) asparagine" evidence="2">
    <location>
        <position position="97"/>
    </location>
</feature>
<feature type="disulfide bond" evidence="3">
    <location>
        <begin position="96"/>
        <end position="174"/>
    </location>
</feature>
<feature type="sequence conflict" description="In Ref. 3; AAI35012." evidence="6" ref="3">
    <original>S</original>
    <variation>T</variation>
    <location>
        <position position="84"/>
    </location>
</feature>
<feature type="sequence conflict" description="In Ref. 3; AAI35012." evidence="6" ref="3">
    <original>E</original>
    <variation>EE</variation>
    <location>
        <position position="519"/>
    </location>
</feature>
<keyword id="KW-1003">Cell membrane</keyword>
<keyword id="KW-0966">Cell projection</keyword>
<keyword id="KW-0969">Cilium</keyword>
<keyword id="KW-0217">Developmental protein</keyword>
<keyword id="KW-1015">Disulfide bond</keyword>
<keyword id="KW-0297">G-protein coupled receptor</keyword>
<keyword id="KW-0325">Glycoprotein</keyword>
<keyword id="KW-0472">Membrane</keyword>
<keyword id="KW-0675">Receptor</keyword>
<keyword id="KW-1185">Reference proteome</keyword>
<keyword id="KW-0807">Transducer</keyword>
<keyword id="KW-0812">Transmembrane</keyword>
<keyword id="KW-1133">Transmembrane helix</keyword>
<gene>
    <name type="primary">gpr161</name>
    <name type="ORF">si:rp71-20i5.4</name>
</gene>
<proteinExistence type="evidence at transcript level"/>
<sequence>MNGSKNGTAVANSTNGLDDNGLMVLESVSIIIIAILACLGNLVIVVTLYKKPYLLTPSNKFVFSLTSSNLLLSVLMLPFVVASSVRRDWMFGVVWCNFTALLHLLVSSSSMLTLGAIAIDRYYAVLYPMIYPMKITGNRAVLAIVYIWLHSLVGCLPPLFGWSSFEFDRFKWTCTVSWHKEISYTAFWVTWCCLLPLVAMLVCYGVIFRVARIKARKVYCGSVVVSQEESSSQNNGRKNSNTSTSSSGSRKSLIYSGSQCKAFITILVVLGTFLTTWGPYVVVISTEALLGKNSVSPQVETLVSWLSFTSAVCHPLIYGLWNKTVRKELLGMCFDDRYYRESFVIRHRTSRLFSISNRITDLGMSPHLTAMLVGGGQLLGRGSSTGDTGFSYTQDSATDVMLLESYTSEASHSAHCTANKRRSSVTFEDQVDHIPQGDPSVVQVTADIHKSLDSFASSLAKAIENDAKLQLLGEWTQIPTSLFTVRNTQRVPRYLDGQRLRMESIDEGIVKDDDDDEEEMEREEKM</sequence>
<comment type="function">
    <text evidence="1 5">Key negative regulator of Shh signaling during neural tube development. Recruited to primary cilia and acts as a regulator of the PKA-dependent basal repression machinery in Shh signaling by increasing cAMP levels, leading to promote the PKA-dependent processing of gli3 into gli3r and repress the Shh signaling. In presence of shh, it is removed from primary cilia, preventing its activity and allowing activation of the Shh signaling (By similarity). Required in left/right patterning by modulating Ca(2+) levels in the cells surrounding the Kupffer vesicle.</text>
</comment>
<comment type="subcellular location">
    <subcellularLocation>
        <location evidence="1">Cell projection</location>
        <location evidence="1">Cilium membrane</location>
        <topology evidence="1">Multi-pass membrane protein</topology>
    </subcellularLocation>
    <subcellularLocation>
        <location evidence="1">Cell membrane</location>
        <topology evidence="1">Multi-pass membrane protein</topology>
    </subcellularLocation>
    <text evidence="1">Mainly localizes to primary cilium and is removed from primary cilia in presence of shh.</text>
</comment>
<comment type="developmental stage">
    <text>Expressed throughout embryonic development. At 9- to 16-somites, transcripts are broadly expressed with specific staining observed in the developing nervous system, somites, and precardiac mesoderm. At later stages 1- to 3-days post-fertilization, transcripts become more localized within the dorsal diencephalon, the otic vesicles, and the fin buds.</text>
</comment>
<comment type="disruption phenotype">
    <text evidence="5">Embryos exhibit perturb cardiac looping as the result of a defect in left/right patterning.</text>
</comment>
<comment type="similarity">
    <text evidence="3">Belongs to the G-protein coupled receptor 1 family.</text>
</comment>
<dbReference type="EMBL" id="EU090912">
    <property type="protein sequence ID" value="ABW77593.1"/>
    <property type="molecule type" value="mRNA"/>
</dbReference>
<dbReference type="EMBL" id="AL590146">
    <property type="protein sequence ID" value="CAC94897.2"/>
    <property type="molecule type" value="Genomic_DNA"/>
</dbReference>
<dbReference type="EMBL" id="BC135011">
    <property type="protein sequence ID" value="AAI35012.1"/>
    <property type="molecule type" value="mRNA"/>
</dbReference>
<dbReference type="RefSeq" id="NP_001007200.2">
    <property type="nucleotide sequence ID" value="NM_001007199.2"/>
</dbReference>
<dbReference type="SMR" id="Q90X46"/>
<dbReference type="FunCoup" id="Q90X46">
    <property type="interactions" value="1642"/>
</dbReference>
<dbReference type="STRING" id="7955.ENSDARP00000072514"/>
<dbReference type="GlyCosmos" id="Q90X46">
    <property type="glycosylation" value="4 sites, No reported glycans"/>
</dbReference>
<dbReference type="PaxDb" id="7955-ENSDARP00000072514"/>
<dbReference type="Ensembl" id="ENSDART00000078051">
    <property type="protein sequence ID" value="ENSDARP00000072514"/>
    <property type="gene ID" value="ENSDARG00000055659"/>
</dbReference>
<dbReference type="Ensembl" id="ENSDART00000143991">
    <property type="protein sequence ID" value="ENSDARP00000118097"/>
    <property type="gene ID" value="ENSDARG00000055659"/>
</dbReference>
<dbReference type="GeneID" id="368421"/>
<dbReference type="KEGG" id="dre:368421"/>
<dbReference type="AGR" id="ZFIN:ZDB-GENE-030616-58"/>
<dbReference type="CTD" id="368421"/>
<dbReference type="ZFIN" id="ZDB-GENE-030616-58">
    <property type="gene designation" value="gpr161b"/>
</dbReference>
<dbReference type="eggNOG" id="KOG3656">
    <property type="taxonomic scope" value="Eukaryota"/>
</dbReference>
<dbReference type="HOGENOM" id="CLU_038027_0_0_1"/>
<dbReference type="InParanoid" id="Q90X46"/>
<dbReference type="OMA" id="KRTCVAS"/>
<dbReference type="OrthoDB" id="5980076at2759"/>
<dbReference type="PhylomeDB" id="Q90X46"/>
<dbReference type="TreeFam" id="TF331895"/>
<dbReference type="Reactome" id="R-DRE-5632684">
    <property type="pathway name" value="Hedgehog 'on' state"/>
</dbReference>
<dbReference type="PRO" id="PR:Q90X46"/>
<dbReference type="Proteomes" id="UP000000437">
    <property type="component" value="Chromosome 9"/>
</dbReference>
<dbReference type="Bgee" id="ENSDARG00000055659">
    <property type="expression patterns" value="Expressed in habenula and 30 other cell types or tissues"/>
</dbReference>
<dbReference type="GO" id="GO:0060170">
    <property type="term" value="C:ciliary membrane"/>
    <property type="evidence" value="ECO:0007669"/>
    <property type="project" value="UniProtKB-SubCell"/>
</dbReference>
<dbReference type="GO" id="GO:0005929">
    <property type="term" value="C:cilium"/>
    <property type="evidence" value="ECO:0000250"/>
    <property type="project" value="UniProtKB"/>
</dbReference>
<dbReference type="GO" id="GO:0055037">
    <property type="term" value="C:recycling endosome"/>
    <property type="evidence" value="ECO:0000250"/>
    <property type="project" value="UniProtKB"/>
</dbReference>
<dbReference type="GO" id="GO:0004930">
    <property type="term" value="F:G protein-coupled receptor activity"/>
    <property type="evidence" value="ECO:0000250"/>
    <property type="project" value="UniProtKB"/>
</dbReference>
<dbReference type="GO" id="GO:0007189">
    <property type="term" value="P:adenylate cyclase-activating G protein-coupled receptor signaling pathway"/>
    <property type="evidence" value="ECO:0000250"/>
    <property type="project" value="UniProtKB"/>
</dbReference>
<dbReference type="GO" id="GO:0007368">
    <property type="term" value="P:determination of left/right symmetry"/>
    <property type="evidence" value="ECO:0000315"/>
    <property type="project" value="ZFIN"/>
</dbReference>
<dbReference type="GO" id="GO:0007186">
    <property type="term" value="P:G protein-coupled receptor signaling pathway"/>
    <property type="evidence" value="ECO:0000318"/>
    <property type="project" value="GO_Central"/>
</dbReference>
<dbReference type="GO" id="GO:1901621">
    <property type="term" value="P:negative regulation of smoothened signaling pathway involved in dorsal/ventral neural tube patterning"/>
    <property type="evidence" value="ECO:0000250"/>
    <property type="project" value="UniProtKB"/>
</dbReference>
<dbReference type="GO" id="GO:0051924">
    <property type="term" value="P:regulation of calcium ion transport"/>
    <property type="evidence" value="ECO:0000315"/>
    <property type="project" value="ZFIN"/>
</dbReference>
<dbReference type="FunFam" id="1.20.1070.10:FF:000091">
    <property type="entry name" value="G-protein coupled receptor 161"/>
    <property type="match status" value="1"/>
</dbReference>
<dbReference type="Gene3D" id="1.20.1070.10">
    <property type="entry name" value="Rhodopsin 7-helix transmembrane proteins"/>
    <property type="match status" value="1"/>
</dbReference>
<dbReference type="InterPro" id="IPR000276">
    <property type="entry name" value="GPCR_Rhodpsn"/>
</dbReference>
<dbReference type="InterPro" id="IPR017452">
    <property type="entry name" value="GPCR_Rhodpsn_7TM"/>
</dbReference>
<dbReference type="PANTHER" id="PTHR22752">
    <property type="entry name" value="G PROTEIN-COUPLED RECEPTOR"/>
    <property type="match status" value="1"/>
</dbReference>
<dbReference type="PANTHER" id="PTHR22752:SF10">
    <property type="entry name" value="G-PROTEIN COUPLED RECEPTOR 161"/>
    <property type="match status" value="1"/>
</dbReference>
<dbReference type="Pfam" id="PF00001">
    <property type="entry name" value="7tm_1"/>
    <property type="match status" value="1"/>
</dbReference>
<dbReference type="PRINTS" id="PR00237">
    <property type="entry name" value="GPCRRHODOPSN"/>
</dbReference>
<dbReference type="SMART" id="SM01381">
    <property type="entry name" value="7TM_GPCR_Srsx"/>
    <property type="match status" value="1"/>
</dbReference>
<dbReference type="SUPFAM" id="SSF81321">
    <property type="entry name" value="Family A G protein-coupled receptor-like"/>
    <property type="match status" value="1"/>
</dbReference>
<dbReference type="PROSITE" id="PS00237">
    <property type="entry name" value="G_PROTEIN_RECEP_F1_1"/>
    <property type="match status" value="1"/>
</dbReference>
<dbReference type="PROSITE" id="PS50262">
    <property type="entry name" value="G_PROTEIN_RECEP_F1_2"/>
    <property type="match status" value="1"/>
</dbReference>
<evidence type="ECO:0000250" key="1"/>
<evidence type="ECO:0000255" key="2"/>
<evidence type="ECO:0000255" key="3">
    <source>
        <dbReference type="PROSITE-ProRule" id="PRU00521"/>
    </source>
</evidence>
<evidence type="ECO:0000256" key="4">
    <source>
        <dbReference type="SAM" id="MobiDB-lite"/>
    </source>
</evidence>
<evidence type="ECO:0000269" key="5">
    <source>
    </source>
</evidence>
<evidence type="ECO:0000305" key="6"/>
<organism>
    <name type="scientific">Danio rerio</name>
    <name type="common">Zebrafish</name>
    <name type="synonym">Brachydanio rerio</name>
    <dbReference type="NCBI Taxonomy" id="7955"/>
    <lineage>
        <taxon>Eukaryota</taxon>
        <taxon>Metazoa</taxon>
        <taxon>Chordata</taxon>
        <taxon>Craniata</taxon>
        <taxon>Vertebrata</taxon>
        <taxon>Euteleostomi</taxon>
        <taxon>Actinopterygii</taxon>
        <taxon>Neopterygii</taxon>
        <taxon>Teleostei</taxon>
        <taxon>Ostariophysi</taxon>
        <taxon>Cypriniformes</taxon>
        <taxon>Danionidae</taxon>
        <taxon>Danioninae</taxon>
        <taxon>Danio</taxon>
    </lineage>
</organism>
<accession>Q90X46</accession>
<accession>A4IGB3</accession>
<name>GP161_DANRE</name>
<protein>
    <recommendedName>
        <fullName>G-protein coupled receptor 161</fullName>
    </recommendedName>
</protein>
<reference key="1">
    <citation type="journal article" date="2008" name="Dev. Biol.">
        <title>The orphan G protein-coupled receptor 161 is required for left-right patterning.</title>
        <authorList>
            <person name="Leung T."/>
            <person name="Humbert J.E."/>
            <person name="Stauffer A.M."/>
            <person name="Giger K.E."/>
            <person name="Chen H."/>
            <person name="Tsai H.-J."/>
            <person name="Wang C."/>
            <person name="Mirshahi T."/>
            <person name="Robishaw J.D."/>
        </authorList>
    </citation>
    <scope>NUCLEOTIDE SEQUENCE [MRNA]</scope>
    <scope>FUNCTION</scope>
    <scope>DISRUPTION PHENOTYPE</scope>
</reference>
<reference key="2">
    <citation type="journal article" date="2013" name="Nature">
        <title>The zebrafish reference genome sequence and its relationship to the human genome.</title>
        <authorList>
            <person name="Howe K."/>
            <person name="Clark M.D."/>
            <person name="Torroja C.F."/>
            <person name="Torrance J."/>
            <person name="Berthelot C."/>
            <person name="Muffato M."/>
            <person name="Collins J.E."/>
            <person name="Humphray S."/>
            <person name="McLaren K."/>
            <person name="Matthews L."/>
            <person name="McLaren S."/>
            <person name="Sealy I."/>
            <person name="Caccamo M."/>
            <person name="Churcher C."/>
            <person name="Scott C."/>
            <person name="Barrett J.C."/>
            <person name="Koch R."/>
            <person name="Rauch G.J."/>
            <person name="White S."/>
            <person name="Chow W."/>
            <person name="Kilian B."/>
            <person name="Quintais L.T."/>
            <person name="Guerra-Assuncao J.A."/>
            <person name="Zhou Y."/>
            <person name="Gu Y."/>
            <person name="Yen J."/>
            <person name="Vogel J.H."/>
            <person name="Eyre T."/>
            <person name="Redmond S."/>
            <person name="Banerjee R."/>
            <person name="Chi J."/>
            <person name="Fu B."/>
            <person name="Langley E."/>
            <person name="Maguire S.F."/>
            <person name="Laird G.K."/>
            <person name="Lloyd D."/>
            <person name="Kenyon E."/>
            <person name="Donaldson S."/>
            <person name="Sehra H."/>
            <person name="Almeida-King J."/>
            <person name="Loveland J."/>
            <person name="Trevanion S."/>
            <person name="Jones M."/>
            <person name="Quail M."/>
            <person name="Willey D."/>
            <person name="Hunt A."/>
            <person name="Burton J."/>
            <person name="Sims S."/>
            <person name="McLay K."/>
            <person name="Plumb B."/>
            <person name="Davis J."/>
            <person name="Clee C."/>
            <person name="Oliver K."/>
            <person name="Clark R."/>
            <person name="Riddle C."/>
            <person name="Elliot D."/>
            <person name="Threadgold G."/>
            <person name="Harden G."/>
            <person name="Ware D."/>
            <person name="Begum S."/>
            <person name="Mortimore B."/>
            <person name="Kerry G."/>
            <person name="Heath P."/>
            <person name="Phillimore B."/>
            <person name="Tracey A."/>
            <person name="Corby N."/>
            <person name="Dunn M."/>
            <person name="Johnson C."/>
            <person name="Wood J."/>
            <person name="Clark S."/>
            <person name="Pelan S."/>
            <person name="Griffiths G."/>
            <person name="Smith M."/>
            <person name="Glithero R."/>
            <person name="Howden P."/>
            <person name="Barker N."/>
            <person name="Lloyd C."/>
            <person name="Stevens C."/>
            <person name="Harley J."/>
            <person name="Holt K."/>
            <person name="Panagiotidis G."/>
            <person name="Lovell J."/>
            <person name="Beasley H."/>
            <person name="Henderson C."/>
            <person name="Gordon D."/>
            <person name="Auger K."/>
            <person name="Wright D."/>
            <person name="Collins J."/>
            <person name="Raisen C."/>
            <person name="Dyer L."/>
            <person name="Leung K."/>
            <person name="Robertson L."/>
            <person name="Ambridge K."/>
            <person name="Leongamornlert D."/>
            <person name="McGuire S."/>
            <person name="Gilderthorp R."/>
            <person name="Griffiths C."/>
            <person name="Manthravadi D."/>
            <person name="Nichol S."/>
            <person name="Barker G."/>
            <person name="Whitehead S."/>
            <person name="Kay M."/>
            <person name="Brown J."/>
            <person name="Murnane C."/>
            <person name="Gray E."/>
            <person name="Humphries M."/>
            <person name="Sycamore N."/>
            <person name="Barker D."/>
            <person name="Saunders D."/>
            <person name="Wallis J."/>
            <person name="Babbage A."/>
            <person name="Hammond S."/>
            <person name="Mashreghi-Mohammadi M."/>
            <person name="Barr L."/>
            <person name="Martin S."/>
            <person name="Wray P."/>
            <person name="Ellington A."/>
            <person name="Matthews N."/>
            <person name="Ellwood M."/>
            <person name="Woodmansey R."/>
            <person name="Clark G."/>
            <person name="Cooper J."/>
            <person name="Tromans A."/>
            <person name="Grafham D."/>
            <person name="Skuce C."/>
            <person name="Pandian R."/>
            <person name="Andrews R."/>
            <person name="Harrison E."/>
            <person name="Kimberley A."/>
            <person name="Garnett J."/>
            <person name="Fosker N."/>
            <person name="Hall R."/>
            <person name="Garner P."/>
            <person name="Kelly D."/>
            <person name="Bird C."/>
            <person name="Palmer S."/>
            <person name="Gehring I."/>
            <person name="Berger A."/>
            <person name="Dooley C.M."/>
            <person name="Ersan-Urun Z."/>
            <person name="Eser C."/>
            <person name="Geiger H."/>
            <person name="Geisler M."/>
            <person name="Karotki L."/>
            <person name="Kirn A."/>
            <person name="Konantz J."/>
            <person name="Konantz M."/>
            <person name="Oberlander M."/>
            <person name="Rudolph-Geiger S."/>
            <person name="Teucke M."/>
            <person name="Lanz C."/>
            <person name="Raddatz G."/>
            <person name="Osoegawa K."/>
            <person name="Zhu B."/>
            <person name="Rapp A."/>
            <person name="Widaa S."/>
            <person name="Langford C."/>
            <person name="Yang F."/>
            <person name="Schuster S.C."/>
            <person name="Carter N.P."/>
            <person name="Harrow J."/>
            <person name="Ning Z."/>
            <person name="Herrero J."/>
            <person name="Searle S.M."/>
            <person name="Enright A."/>
            <person name="Geisler R."/>
            <person name="Plasterk R.H."/>
            <person name="Lee C."/>
            <person name="Westerfield M."/>
            <person name="de Jong P.J."/>
            <person name="Zon L.I."/>
            <person name="Postlethwait J.H."/>
            <person name="Nusslein-Volhard C."/>
            <person name="Hubbard T.J."/>
            <person name="Roest Crollius H."/>
            <person name="Rogers J."/>
            <person name="Stemple D.L."/>
        </authorList>
    </citation>
    <scope>NUCLEOTIDE SEQUENCE [LARGE SCALE GENOMIC DNA]</scope>
    <source>
        <strain>Tuebingen</strain>
    </source>
</reference>
<reference key="3">
    <citation type="submission" date="2007-03" db="EMBL/GenBank/DDBJ databases">
        <authorList>
            <consortium name="NIH - Zebrafish Gene Collection (ZGC) project"/>
        </authorList>
    </citation>
    <scope>NUCLEOTIDE SEQUENCE [LARGE SCALE MRNA]</scope>
    <source>
        <tissue>Embryo</tissue>
    </source>
</reference>